<comment type="function">
    <text evidence="1">Catalyzes the isomerization between 2-isopropylmalate and 3-isopropylmalate, via the formation of 2-isopropylmaleate.</text>
</comment>
<comment type="catalytic activity">
    <reaction evidence="1">
        <text>(2R,3S)-3-isopropylmalate = (2S)-2-isopropylmalate</text>
        <dbReference type="Rhea" id="RHEA:32287"/>
        <dbReference type="ChEBI" id="CHEBI:1178"/>
        <dbReference type="ChEBI" id="CHEBI:35121"/>
        <dbReference type="EC" id="4.2.1.33"/>
    </reaction>
</comment>
<comment type="cofactor">
    <cofactor evidence="1">
        <name>[4Fe-4S] cluster</name>
        <dbReference type="ChEBI" id="CHEBI:49883"/>
    </cofactor>
    <text evidence="1">Binds 1 [4Fe-4S] cluster per subunit.</text>
</comment>
<comment type="pathway">
    <text evidence="1">Amino-acid biosynthesis; L-leucine biosynthesis; L-leucine from 3-methyl-2-oxobutanoate: step 2/4.</text>
</comment>
<comment type="subunit">
    <text evidence="1">Heterodimer of LeuC and LeuD.</text>
</comment>
<comment type="similarity">
    <text evidence="1">Belongs to the aconitase/IPM isomerase family. LeuC type 1 subfamily.</text>
</comment>
<gene>
    <name evidence="1" type="primary">leuC</name>
    <name type="ordered locus">Plav_1423</name>
</gene>
<keyword id="KW-0004">4Fe-4S</keyword>
<keyword id="KW-0028">Amino-acid biosynthesis</keyword>
<keyword id="KW-0100">Branched-chain amino acid biosynthesis</keyword>
<keyword id="KW-0408">Iron</keyword>
<keyword id="KW-0411">Iron-sulfur</keyword>
<keyword id="KW-0432">Leucine biosynthesis</keyword>
<keyword id="KW-0456">Lyase</keyword>
<keyword id="KW-0479">Metal-binding</keyword>
<keyword id="KW-1185">Reference proteome</keyword>
<feature type="chain" id="PRO_0000319826" description="3-isopropylmalate dehydratase large subunit">
    <location>
        <begin position="1"/>
        <end position="473"/>
    </location>
</feature>
<feature type="binding site" evidence="1">
    <location>
        <position position="348"/>
    </location>
    <ligand>
        <name>[4Fe-4S] cluster</name>
        <dbReference type="ChEBI" id="CHEBI:49883"/>
    </ligand>
</feature>
<feature type="binding site" evidence="1">
    <location>
        <position position="413"/>
    </location>
    <ligand>
        <name>[4Fe-4S] cluster</name>
        <dbReference type="ChEBI" id="CHEBI:49883"/>
    </ligand>
</feature>
<feature type="binding site" evidence="1">
    <location>
        <position position="416"/>
    </location>
    <ligand>
        <name>[4Fe-4S] cluster</name>
        <dbReference type="ChEBI" id="CHEBI:49883"/>
    </ligand>
</feature>
<proteinExistence type="inferred from homology"/>
<sequence length="473" mass="51138">MAPRTMYDKIWDAHLVEMAEDGTGLLYIDRHLVHEVTSPQAFEGLRMAKRQVHAPQKTLAVADHNVPTTDRSKGIADEESRIQVETLEHNAQDFGVEYLQMSDIRQGIVHIVGPEQGFTLPGTTIVCGDSHTSTHGAFGALAHGIGTSEVEHVLATQTLIQSKAKNMRINVVGKAPEGFTAKDIVLAIIGEIGTAGGTGYVIEYAGEAIRDLSMEGRMTVCNMTIEGGARAGLIAPDDKTYAYLEGRPRAPKGKAWEMAVEYWKTLPSDPDAKFDKEITIDIANLPPLITWGTSPENVIKITDRIPDPKDVADPSHAKSMQRALDYMGLTPGTPINEVKIDRVFIGSCTNGRIEDLRAAAVIAEKAIKAGRKVASTVNAMVVPGSGLVKEQAEKEGLDKIFLEAGFEWREPGCSMCLAMNADKLAPGERCASTSNRNFEGRQGRGGRTHLVSPAMAVAAAIEGHFTDVREFGN</sequence>
<dbReference type="EC" id="4.2.1.33" evidence="1"/>
<dbReference type="EMBL" id="CP000774">
    <property type="protein sequence ID" value="ABS63043.1"/>
    <property type="molecule type" value="Genomic_DNA"/>
</dbReference>
<dbReference type="RefSeq" id="WP_012110320.1">
    <property type="nucleotide sequence ID" value="NC_009719.1"/>
</dbReference>
<dbReference type="SMR" id="A7HT10"/>
<dbReference type="STRING" id="402881.Plav_1423"/>
<dbReference type="KEGG" id="pla:Plav_1423"/>
<dbReference type="eggNOG" id="COG0065">
    <property type="taxonomic scope" value="Bacteria"/>
</dbReference>
<dbReference type="HOGENOM" id="CLU_006714_3_4_5"/>
<dbReference type="OrthoDB" id="9802769at2"/>
<dbReference type="UniPathway" id="UPA00048">
    <property type="reaction ID" value="UER00071"/>
</dbReference>
<dbReference type="Proteomes" id="UP000006377">
    <property type="component" value="Chromosome"/>
</dbReference>
<dbReference type="GO" id="GO:0003861">
    <property type="term" value="F:3-isopropylmalate dehydratase activity"/>
    <property type="evidence" value="ECO:0007669"/>
    <property type="project" value="UniProtKB-UniRule"/>
</dbReference>
<dbReference type="GO" id="GO:0051539">
    <property type="term" value="F:4 iron, 4 sulfur cluster binding"/>
    <property type="evidence" value="ECO:0007669"/>
    <property type="project" value="UniProtKB-KW"/>
</dbReference>
<dbReference type="GO" id="GO:0046872">
    <property type="term" value="F:metal ion binding"/>
    <property type="evidence" value="ECO:0007669"/>
    <property type="project" value="UniProtKB-KW"/>
</dbReference>
<dbReference type="GO" id="GO:0009098">
    <property type="term" value="P:L-leucine biosynthetic process"/>
    <property type="evidence" value="ECO:0007669"/>
    <property type="project" value="UniProtKB-UniRule"/>
</dbReference>
<dbReference type="CDD" id="cd01583">
    <property type="entry name" value="IPMI"/>
    <property type="match status" value="1"/>
</dbReference>
<dbReference type="FunFam" id="3.30.499.10:FF:000006">
    <property type="entry name" value="3-isopropylmalate dehydratase large subunit"/>
    <property type="match status" value="1"/>
</dbReference>
<dbReference type="FunFam" id="3.30.499.10:FF:000007">
    <property type="entry name" value="3-isopropylmalate dehydratase large subunit"/>
    <property type="match status" value="1"/>
</dbReference>
<dbReference type="Gene3D" id="3.30.499.10">
    <property type="entry name" value="Aconitase, domain 3"/>
    <property type="match status" value="2"/>
</dbReference>
<dbReference type="HAMAP" id="MF_01026">
    <property type="entry name" value="LeuC_type1"/>
    <property type="match status" value="1"/>
</dbReference>
<dbReference type="InterPro" id="IPR004430">
    <property type="entry name" value="3-IsopropMal_deHydase_lsu"/>
</dbReference>
<dbReference type="InterPro" id="IPR015931">
    <property type="entry name" value="Acnase/IPM_dHydase_lsu_aba_1/3"/>
</dbReference>
<dbReference type="InterPro" id="IPR001030">
    <property type="entry name" value="Acoase/IPM_deHydtase_lsu_aba"/>
</dbReference>
<dbReference type="InterPro" id="IPR018136">
    <property type="entry name" value="Aconitase_4Fe-4S_BS"/>
</dbReference>
<dbReference type="InterPro" id="IPR036008">
    <property type="entry name" value="Aconitase_4Fe-4S_dom"/>
</dbReference>
<dbReference type="InterPro" id="IPR050067">
    <property type="entry name" value="IPM_dehydratase_rel_enz"/>
</dbReference>
<dbReference type="InterPro" id="IPR033941">
    <property type="entry name" value="IPMI_cat"/>
</dbReference>
<dbReference type="NCBIfam" id="TIGR00170">
    <property type="entry name" value="leuC"/>
    <property type="match status" value="1"/>
</dbReference>
<dbReference type="NCBIfam" id="NF004016">
    <property type="entry name" value="PRK05478.1"/>
    <property type="match status" value="1"/>
</dbReference>
<dbReference type="NCBIfam" id="NF009116">
    <property type="entry name" value="PRK12466.1"/>
    <property type="match status" value="1"/>
</dbReference>
<dbReference type="PANTHER" id="PTHR43822:SF9">
    <property type="entry name" value="3-ISOPROPYLMALATE DEHYDRATASE"/>
    <property type="match status" value="1"/>
</dbReference>
<dbReference type="PANTHER" id="PTHR43822">
    <property type="entry name" value="HOMOACONITASE, MITOCHONDRIAL-RELATED"/>
    <property type="match status" value="1"/>
</dbReference>
<dbReference type="Pfam" id="PF00330">
    <property type="entry name" value="Aconitase"/>
    <property type="match status" value="1"/>
</dbReference>
<dbReference type="PRINTS" id="PR00415">
    <property type="entry name" value="ACONITASE"/>
</dbReference>
<dbReference type="SUPFAM" id="SSF53732">
    <property type="entry name" value="Aconitase iron-sulfur domain"/>
    <property type="match status" value="1"/>
</dbReference>
<dbReference type="PROSITE" id="PS00450">
    <property type="entry name" value="ACONITASE_1"/>
    <property type="match status" value="1"/>
</dbReference>
<dbReference type="PROSITE" id="PS01244">
    <property type="entry name" value="ACONITASE_2"/>
    <property type="match status" value="1"/>
</dbReference>
<organism>
    <name type="scientific">Parvibaculum lavamentivorans (strain DS-1 / DSM 13023 / NCIMB 13966)</name>
    <dbReference type="NCBI Taxonomy" id="402881"/>
    <lineage>
        <taxon>Bacteria</taxon>
        <taxon>Pseudomonadati</taxon>
        <taxon>Pseudomonadota</taxon>
        <taxon>Alphaproteobacteria</taxon>
        <taxon>Hyphomicrobiales</taxon>
        <taxon>Parvibaculaceae</taxon>
        <taxon>Parvibaculum</taxon>
    </lineage>
</organism>
<protein>
    <recommendedName>
        <fullName evidence="1">3-isopropylmalate dehydratase large subunit</fullName>
        <ecNumber evidence="1">4.2.1.33</ecNumber>
    </recommendedName>
    <alternativeName>
        <fullName evidence="1">Alpha-IPM isomerase</fullName>
        <shortName evidence="1">IPMI</shortName>
    </alternativeName>
    <alternativeName>
        <fullName evidence="1">Isopropylmalate isomerase</fullName>
    </alternativeName>
</protein>
<evidence type="ECO:0000255" key="1">
    <source>
        <dbReference type="HAMAP-Rule" id="MF_01026"/>
    </source>
</evidence>
<name>LEUC_PARL1</name>
<reference key="1">
    <citation type="journal article" date="2011" name="Stand. Genomic Sci.">
        <title>Complete genome sequence of Parvibaculum lavamentivorans type strain (DS-1(T)).</title>
        <authorList>
            <person name="Schleheck D."/>
            <person name="Weiss M."/>
            <person name="Pitluck S."/>
            <person name="Bruce D."/>
            <person name="Land M.L."/>
            <person name="Han S."/>
            <person name="Saunders E."/>
            <person name="Tapia R."/>
            <person name="Detter C."/>
            <person name="Brettin T."/>
            <person name="Han J."/>
            <person name="Woyke T."/>
            <person name="Goodwin L."/>
            <person name="Pennacchio L."/>
            <person name="Nolan M."/>
            <person name="Cook A.M."/>
            <person name="Kjelleberg S."/>
            <person name="Thomas T."/>
        </authorList>
    </citation>
    <scope>NUCLEOTIDE SEQUENCE [LARGE SCALE GENOMIC DNA]</scope>
    <source>
        <strain>DS-1 / DSM 13023 / NCIMB 13966</strain>
    </source>
</reference>
<accession>A7HT10</accession>